<accession>P75306</accession>
<feature type="chain" id="PRO_0000175851" description="Probable transcriptional regulatory protein MPN_478">
    <location>
        <begin position="1"/>
        <end position="235"/>
    </location>
</feature>
<sequence>MPRKHLIASQTNKKQQSNAKQLQKLAKRIAAAVKKGGSNIDANPQLKVAVELALAHGLSADSIKRNIHGSEKDPTKLSEFCYEIFGPNGVGIIVFGLTDNPNRLLSSLNGYIAKLKAQLAKPNSVKINFEEKGIALVKHNNFTQDELIELLISNNINLLDLNEDDDSFEVVVDSPSYFALKDLLVKNSFTIEASELRLIPLLTVELNAEQHTLLNRFLNACEEDDDIQTVVHNAL</sequence>
<comment type="subcellular location">
    <subcellularLocation>
        <location evidence="1">Cytoplasm</location>
    </subcellularLocation>
</comment>
<comment type="similarity">
    <text evidence="1">Belongs to the TACO1 family.</text>
</comment>
<proteinExistence type="inferred from homology"/>
<evidence type="ECO:0000255" key="1">
    <source>
        <dbReference type="HAMAP-Rule" id="MF_00693"/>
    </source>
</evidence>
<dbReference type="EMBL" id="U00089">
    <property type="protein sequence ID" value="AAB96011.1"/>
    <property type="molecule type" value="Genomic_DNA"/>
</dbReference>
<dbReference type="PIR" id="S73689">
    <property type="entry name" value="S73689"/>
</dbReference>
<dbReference type="RefSeq" id="NP_110166.1">
    <property type="nucleotide sequence ID" value="NC_000912.1"/>
</dbReference>
<dbReference type="RefSeq" id="WP_010874834.1">
    <property type="nucleotide sequence ID" value="NZ_OU342337.1"/>
</dbReference>
<dbReference type="SMR" id="P75306"/>
<dbReference type="STRING" id="272634.MPN_478"/>
<dbReference type="EnsemblBacteria" id="AAB96011">
    <property type="protein sequence ID" value="AAB96011"/>
    <property type="gene ID" value="MPN_478"/>
</dbReference>
<dbReference type="KEGG" id="mpn:MPN_478"/>
<dbReference type="PATRIC" id="fig|272634.6.peg.517"/>
<dbReference type="HOGENOM" id="CLU_062974_2_2_14"/>
<dbReference type="OrthoDB" id="9781053at2"/>
<dbReference type="BioCyc" id="MPNE272634:G1GJ3-784-MONOMER"/>
<dbReference type="Proteomes" id="UP000000808">
    <property type="component" value="Chromosome"/>
</dbReference>
<dbReference type="GO" id="GO:0005829">
    <property type="term" value="C:cytosol"/>
    <property type="evidence" value="ECO:0007669"/>
    <property type="project" value="TreeGrafter"/>
</dbReference>
<dbReference type="GO" id="GO:0003677">
    <property type="term" value="F:DNA binding"/>
    <property type="evidence" value="ECO:0007669"/>
    <property type="project" value="UniProtKB-UniRule"/>
</dbReference>
<dbReference type="GO" id="GO:0006355">
    <property type="term" value="P:regulation of DNA-templated transcription"/>
    <property type="evidence" value="ECO:0007669"/>
    <property type="project" value="UniProtKB-UniRule"/>
</dbReference>
<dbReference type="FunFam" id="1.10.10.200:FF:000004">
    <property type="entry name" value="Probable transcriptional regulatory protein BSBG_02618"/>
    <property type="match status" value="1"/>
</dbReference>
<dbReference type="Gene3D" id="1.10.10.200">
    <property type="match status" value="1"/>
</dbReference>
<dbReference type="Gene3D" id="3.30.70.980">
    <property type="match status" value="2"/>
</dbReference>
<dbReference type="HAMAP" id="MF_00693">
    <property type="entry name" value="Transcrip_reg_TACO1"/>
    <property type="match status" value="1"/>
</dbReference>
<dbReference type="InterPro" id="IPR017856">
    <property type="entry name" value="Integrase-like_N"/>
</dbReference>
<dbReference type="InterPro" id="IPR048300">
    <property type="entry name" value="TACO1_YebC-like_2nd/3rd_dom"/>
</dbReference>
<dbReference type="InterPro" id="IPR049083">
    <property type="entry name" value="TACO1_YebC_N"/>
</dbReference>
<dbReference type="InterPro" id="IPR002876">
    <property type="entry name" value="Transcrip_reg_TACO1-like"/>
</dbReference>
<dbReference type="InterPro" id="IPR026564">
    <property type="entry name" value="Transcrip_reg_TACO1-like_dom3"/>
</dbReference>
<dbReference type="InterPro" id="IPR029072">
    <property type="entry name" value="YebC-like"/>
</dbReference>
<dbReference type="NCBIfam" id="NF009044">
    <property type="entry name" value="PRK12378.1"/>
    <property type="match status" value="1"/>
</dbReference>
<dbReference type="NCBIfam" id="TIGR01033">
    <property type="entry name" value="YebC/PmpR family DNA-binding transcriptional regulator"/>
    <property type="match status" value="1"/>
</dbReference>
<dbReference type="PANTHER" id="PTHR12532:SF6">
    <property type="entry name" value="TRANSCRIPTIONAL REGULATORY PROTEIN YEBC-RELATED"/>
    <property type="match status" value="1"/>
</dbReference>
<dbReference type="PANTHER" id="PTHR12532">
    <property type="entry name" value="TRANSLATIONAL ACTIVATOR OF CYTOCHROME C OXIDASE 1"/>
    <property type="match status" value="1"/>
</dbReference>
<dbReference type="Pfam" id="PF20772">
    <property type="entry name" value="TACO1_YebC_N"/>
    <property type="match status" value="1"/>
</dbReference>
<dbReference type="Pfam" id="PF01709">
    <property type="entry name" value="Transcrip_reg"/>
    <property type="match status" value="1"/>
</dbReference>
<dbReference type="SUPFAM" id="SSF75625">
    <property type="entry name" value="YebC-like"/>
    <property type="match status" value="1"/>
</dbReference>
<reference key="1">
    <citation type="journal article" date="1996" name="Nucleic Acids Res.">
        <title>Complete sequence analysis of the genome of the bacterium Mycoplasma pneumoniae.</title>
        <authorList>
            <person name="Himmelreich R."/>
            <person name="Hilbert H."/>
            <person name="Plagens H."/>
            <person name="Pirkl E."/>
            <person name="Li B.-C."/>
            <person name="Herrmann R."/>
        </authorList>
    </citation>
    <scope>NUCLEOTIDE SEQUENCE [LARGE SCALE GENOMIC DNA]</scope>
    <source>
        <strain>ATCC 29342 / M129 / Subtype 1</strain>
    </source>
</reference>
<gene>
    <name type="ordered locus">MPN_478</name>
    <name type="ORF">MP363</name>
    <name type="ORF">P01_orf235</name>
</gene>
<keyword id="KW-0963">Cytoplasm</keyword>
<keyword id="KW-0238">DNA-binding</keyword>
<keyword id="KW-1185">Reference proteome</keyword>
<keyword id="KW-0804">Transcription</keyword>
<keyword id="KW-0805">Transcription regulation</keyword>
<protein>
    <recommendedName>
        <fullName evidence="1">Probable transcriptional regulatory protein MPN_478</fullName>
    </recommendedName>
</protein>
<organism>
    <name type="scientific">Mycoplasma pneumoniae (strain ATCC 29342 / M129 / Subtype 1)</name>
    <name type="common">Mycoplasmoides pneumoniae</name>
    <dbReference type="NCBI Taxonomy" id="272634"/>
    <lineage>
        <taxon>Bacteria</taxon>
        <taxon>Bacillati</taxon>
        <taxon>Mycoplasmatota</taxon>
        <taxon>Mycoplasmoidales</taxon>
        <taxon>Mycoplasmoidaceae</taxon>
        <taxon>Mycoplasmoides</taxon>
    </lineage>
</organism>
<name>Y478_MYCPN</name>